<accession>Q21PV5</accession>
<dbReference type="EC" id="3.5.1.88" evidence="1"/>
<dbReference type="EMBL" id="CP000282">
    <property type="protein sequence ID" value="ABD79285.1"/>
    <property type="molecule type" value="Genomic_DNA"/>
</dbReference>
<dbReference type="RefSeq" id="WP_011466509.1">
    <property type="nucleotide sequence ID" value="NC_007912.1"/>
</dbReference>
<dbReference type="SMR" id="Q21PV5"/>
<dbReference type="STRING" id="203122.Sde_0021"/>
<dbReference type="GeneID" id="98611741"/>
<dbReference type="KEGG" id="sde:Sde_0021"/>
<dbReference type="eggNOG" id="COG0242">
    <property type="taxonomic scope" value="Bacteria"/>
</dbReference>
<dbReference type="HOGENOM" id="CLU_061901_2_1_6"/>
<dbReference type="OrthoDB" id="9804313at2"/>
<dbReference type="Proteomes" id="UP000001947">
    <property type="component" value="Chromosome"/>
</dbReference>
<dbReference type="GO" id="GO:0046872">
    <property type="term" value="F:metal ion binding"/>
    <property type="evidence" value="ECO:0007669"/>
    <property type="project" value="UniProtKB-KW"/>
</dbReference>
<dbReference type="GO" id="GO:0042586">
    <property type="term" value="F:peptide deformylase activity"/>
    <property type="evidence" value="ECO:0007669"/>
    <property type="project" value="UniProtKB-UniRule"/>
</dbReference>
<dbReference type="GO" id="GO:0043686">
    <property type="term" value="P:co-translational protein modification"/>
    <property type="evidence" value="ECO:0007669"/>
    <property type="project" value="TreeGrafter"/>
</dbReference>
<dbReference type="GO" id="GO:0006412">
    <property type="term" value="P:translation"/>
    <property type="evidence" value="ECO:0007669"/>
    <property type="project" value="UniProtKB-UniRule"/>
</dbReference>
<dbReference type="CDD" id="cd00487">
    <property type="entry name" value="Pep_deformylase"/>
    <property type="match status" value="1"/>
</dbReference>
<dbReference type="FunFam" id="3.90.45.10:FF:000001">
    <property type="entry name" value="Peptide deformylase"/>
    <property type="match status" value="1"/>
</dbReference>
<dbReference type="Gene3D" id="3.90.45.10">
    <property type="entry name" value="Peptide deformylase"/>
    <property type="match status" value="1"/>
</dbReference>
<dbReference type="HAMAP" id="MF_00163">
    <property type="entry name" value="Pep_deformylase"/>
    <property type="match status" value="1"/>
</dbReference>
<dbReference type="InterPro" id="IPR023635">
    <property type="entry name" value="Peptide_deformylase"/>
</dbReference>
<dbReference type="InterPro" id="IPR036821">
    <property type="entry name" value="Peptide_deformylase_sf"/>
</dbReference>
<dbReference type="NCBIfam" id="TIGR00079">
    <property type="entry name" value="pept_deformyl"/>
    <property type="match status" value="1"/>
</dbReference>
<dbReference type="NCBIfam" id="NF001159">
    <property type="entry name" value="PRK00150.1-3"/>
    <property type="match status" value="1"/>
</dbReference>
<dbReference type="PANTHER" id="PTHR10458">
    <property type="entry name" value="PEPTIDE DEFORMYLASE"/>
    <property type="match status" value="1"/>
</dbReference>
<dbReference type="PANTHER" id="PTHR10458:SF21">
    <property type="entry name" value="PEPTIDE DEFORMYLASE"/>
    <property type="match status" value="1"/>
</dbReference>
<dbReference type="Pfam" id="PF01327">
    <property type="entry name" value="Pep_deformylase"/>
    <property type="match status" value="1"/>
</dbReference>
<dbReference type="PIRSF" id="PIRSF004749">
    <property type="entry name" value="Pep_def"/>
    <property type="match status" value="1"/>
</dbReference>
<dbReference type="PRINTS" id="PR01576">
    <property type="entry name" value="PDEFORMYLASE"/>
</dbReference>
<dbReference type="SUPFAM" id="SSF56420">
    <property type="entry name" value="Peptide deformylase"/>
    <property type="match status" value="1"/>
</dbReference>
<protein>
    <recommendedName>
        <fullName evidence="1">Peptide deformylase</fullName>
        <shortName evidence="1">PDF</shortName>
        <ecNumber evidence="1">3.5.1.88</ecNumber>
    </recommendedName>
    <alternativeName>
        <fullName evidence="1">Polypeptide deformylase</fullName>
    </alternativeName>
</protein>
<organism>
    <name type="scientific">Saccharophagus degradans (strain 2-40 / ATCC 43961 / DSM 17024)</name>
    <dbReference type="NCBI Taxonomy" id="203122"/>
    <lineage>
        <taxon>Bacteria</taxon>
        <taxon>Pseudomonadati</taxon>
        <taxon>Pseudomonadota</taxon>
        <taxon>Gammaproteobacteria</taxon>
        <taxon>Cellvibrionales</taxon>
        <taxon>Cellvibrionaceae</taxon>
        <taxon>Saccharophagus</taxon>
    </lineage>
</organism>
<name>DEF_SACD2</name>
<proteinExistence type="inferred from homology"/>
<gene>
    <name evidence="1" type="primary">def</name>
    <name type="ordered locus">Sde_0021</name>
</gene>
<comment type="function">
    <text evidence="1">Removes the formyl group from the N-terminal Met of newly synthesized proteins. Requires at least a dipeptide for an efficient rate of reaction. N-terminal L-methionine is a prerequisite for activity but the enzyme has broad specificity at other positions.</text>
</comment>
<comment type="catalytic activity">
    <reaction evidence="1">
        <text>N-terminal N-formyl-L-methionyl-[peptide] + H2O = N-terminal L-methionyl-[peptide] + formate</text>
        <dbReference type="Rhea" id="RHEA:24420"/>
        <dbReference type="Rhea" id="RHEA-COMP:10639"/>
        <dbReference type="Rhea" id="RHEA-COMP:10640"/>
        <dbReference type="ChEBI" id="CHEBI:15377"/>
        <dbReference type="ChEBI" id="CHEBI:15740"/>
        <dbReference type="ChEBI" id="CHEBI:49298"/>
        <dbReference type="ChEBI" id="CHEBI:64731"/>
        <dbReference type="EC" id="3.5.1.88"/>
    </reaction>
</comment>
<comment type="cofactor">
    <cofactor evidence="1">
        <name>Fe(2+)</name>
        <dbReference type="ChEBI" id="CHEBI:29033"/>
    </cofactor>
    <text evidence="1">Binds 1 Fe(2+) ion.</text>
</comment>
<comment type="similarity">
    <text evidence="1">Belongs to the polypeptide deformylase family.</text>
</comment>
<evidence type="ECO:0000255" key="1">
    <source>
        <dbReference type="HAMAP-Rule" id="MF_00163"/>
    </source>
</evidence>
<feature type="chain" id="PRO_0000301092" description="Peptide deformylase">
    <location>
        <begin position="1"/>
        <end position="172"/>
    </location>
</feature>
<feature type="active site" evidence="1">
    <location>
        <position position="135"/>
    </location>
</feature>
<feature type="binding site" evidence="1">
    <location>
        <position position="92"/>
    </location>
    <ligand>
        <name>Fe cation</name>
        <dbReference type="ChEBI" id="CHEBI:24875"/>
    </ligand>
</feature>
<feature type="binding site" evidence="1">
    <location>
        <position position="134"/>
    </location>
    <ligand>
        <name>Fe cation</name>
        <dbReference type="ChEBI" id="CHEBI:24875"/>
    </ligand>
</feature>
<feature type="binding site" evidence="1">
    <location>
        <position position="138"/>
    </location>
    <ligand>
        <name>Fe cation</name>
        <dbReference type="ChEBI" id="CHEBI:24875"/>
    </ligand>
</feature>
<sequence>MALLPILEFPDPRLRTIAKPVAKVDQRIRTLIDDMFETMYDAPGIGLAATQVNVHEQVLVIDLGEETKEPMVFINPSIEILDQEHYEYEEGCLSVPGFYEQVSRPKHIRVTALDRDGKEFVIEPEGLLAVCVQHEMDHLNGKLFVDYVSNIKRQRIRKKLEKQHRQAAQSVG</sequence>
<keyword id="KW-0378">Hydrolase</keyword>
<keyword id="KW-0408">Iron</keyword>
<keyword id="KW-0479">Metal-binding</keyword>
<keyword id="KW-0648">Protein biosynthesis</keyword>
<keyword id="KW-1185">Reference proteome</keyword>
<reference key="1">
    <citation type="journal article" date="2008" name="PLoS Genet.">
        <title>Complete genome sequence of the complex carbohydrate-degrading marine bacterium, Saccharophagus degradans strain 2-40 T.</title>
        <authorList>
            <person name="Weiner R.M."/>
            <person name="Taylor L.E. II"/>
            <person name="Henrissat B."/>
            <person name="Hauser L."/>
            <person name="Land M."/>
            <person name="Coutinho P.M."/>
            <person name="Rancurel C."/>
            <person name="Saunders E.H."/>
            <person name="Longmire A.G."/>
            <person name="Zhang H."/>
            <person name="Bayer E.A."/>
            <person name="Gilbert H.J."/>
            <person name="Larimer F."/>
            <person name="Zhulin I.B."/>
            <person name="Ekborg N.A."/>
            <person name="Lamed R."/>
            <person name="Richardson P.M."/>
            <person name="Borovok I."/>
            <person name="Hutcheson S."/>
        </authorList>
    </citation>
    <scope>NUCLEOTIDE SEQUENCE [LARGE SCALE GENOMIC DNA]</scope>
    <source>
        <strain>2-40 / ATCC 43961 / DSM 17024</strain>
    </source>
</reference>